<dbReference type="EC" id="6.3.4.13" evidence="2"/>
<dbReference type="EMBL" id="BA000031">
    <property type="protein sequence ID" value="BAC61161.1"/>
    <property type="molecule type" value="Genomic_DNA"/>
</dbReference>
<dbReference type="RefSeq" id="NP_799277.1">
    <property type="nucleotide sequence ID" value="NC_004603.1"/>
</dbReference>
<dbReference type="RefSeq" id="WP_005456447.1">
    <property type="nucleotide sequence ID" value="NC_004603.1"/>
</dbReference>
<dbReference type="SMR" id="Q87KS8"/>
<dbReference type="GeneID" id="1190473"/>
<dbReference type="KEGG" id="vpa:VP2898"/>
<dbReference type="PATRIC" id="fig|223926.6.peg.2788"/>
<dbReference type="eggNOG" id="COG0151">
    <property type="taxonomic scope" value="Bacteria"/>
</dbReference>
<dbReference type="HOGENOM" id="CLU_027420_3_1_6"/>
<dbReference type="UniPathway" id="UPA00074">
    <property type="reaction ID" value="UER00125"/>
</dbReference>
<dbReference type="Proteomes" id="UP000002493">
    <property type="component" value="Chromosome 1"/>
</dbReference>
<dbReference type="GO" id="GO:0005524">
    <property type="term" value="F:ATP binding"/>
    <property type="evidence" value="ECO:0007669"/>
    <property type="project" value="UniProtKB-KW"/>
</dbReference>
<dbReference type="GO" id="GO:0046872">
    <property type="term" value="F:metal ion binding"/>
    <property type="evidence" value="ECO:0007669"/>
    <property type="project" value="UniProtKB-KW"/>
</dbReference>
<dbReference type="GO" id="GO:0004637">
    <property type="term" value="F:phosphoribosylamine-glycine ligase activity"/>
    <property type="evidence" value="ECO:0007669"/>
    <property type="project" value="UniProtKB-UniRule"/>
</dbReference>
<dbReference type="GO" id="GO:0006189">
    <property type="term" value="P:'de novo' IMP biosynthetic process"/>
    <property type="evidence" value="ECO:0007669"/>
    <property type="project" value="UniProtKB-UniRule"/>
</dbReference>
<dbReference type="GO" id="GO:0009113">
    <property type="term" value="P:purine nucleobase biosynthetic process"/>
    <property type="evidence" value="ECO:0007669"/>
    <property type="project" value="InterPro"/>
</dbReference>
<dbReference type="FunFam" id="3.30.470.20:FF:000031">
    <property type="entry name" value="Phosphoribosylamine--glycine ligase"/>
    <property type="match status" value="1"/>
</dbReference>
<dbReference type="FunFam" id="3.40.50.20:FF:000006">
    <property type="entry name" value="Phosphoribosylamine--glycine ligase, chloroplastic"/>
    <property type="match status" value="1"/>
</dbReference>
<dbReference type="FunFam" id="3.30.1490.20:FF:000006">
    <property type="entry name" value="phosphoribosylamine--glycine ligase, chloroplastic-like"/>
    <property type="match status" value="1"/>
</dbReference>
<dbReference type="FunFam" id="3.90.600.10:FF:000001">
    <property type="entry name" value="Trifunctional purine biosynthetic protein adenosine-3"/>
    <property type="match status" value="1"/>
</dbReference>
<dbReference type="Gene3D" id="3.40.50.20">
    <property type="match status" value="1"/>
</dbReference>
<dbReference type="Gene3D" id="3.30.1490.20">
    <property type="entry name" value="ATP-grasp fold, A domain"/>
    <property type="match status" value="1"/>
</dbReference>
<dbReference type="Gene3D" id="3.30.470.20">
    <property type="entry name" value="ATP-grasp fold, B domain"/>
    <property type="match status" value="1"/>
</dbReference>
<dbReference type="Gene3D" id="3.90.600.10">
    <property type="entry name" value="Phosphoribosylglycinamide synthetase, C-terminal domain"/>
    <property type="match status" value="1"/>
</dbReference>
<dbReference type="HAMAP" id="MF_00138">
    <property type="entry name" value="GARS"/>
    <property type="match status" value="1"/>
</dbReference>
<dbReference type="InterPro" id="IPR011761">
    <property type="entry name" value="ATP-grasp"/>
</dbReference>
<dbReference type="InterPro" id="IPR013815">
    <property type="entry name" value="ATP_grasp_subdomain_1"/>
</dbReference>
<dbReference type="InterPro" id="IPR016185">
    <property type="entry name" value="PreATP-grasp_dom_sf"/>
</dbReference>
<dbReference type="InterPro" id="IPR020561">
    <property type="entry name" value="PRibGlycinamid_synth_ATP-grasp"/>
</dbReference>
<dbReference type="InterPro" id="IPR000115">
    <property type="entry name" value="PRibGlycinamide_synth"/>
</dbReference>
<dbReference type="InterPro" id="IPR020560">
    <property type="entry name" value="PRibGlycinamide_synth_C-dom"/>
</dbReference>
<dbReference type="InterPro" id="IPR037123">
    <property type="entry name" value="PRibGlycinamide_synth_C_sf"/>
</dbReference>
<dbReference type="InterPro" id="IPR020559">
    <property type="entry name" value="PRibGlycinamide_synth_CS"/>
</dbReference>
<dbReference type="InterPro" id="IPR020562">
    <property type="entry name" value="PRibGlycinamide_synth_N"/>
</dbReference>
<dbReference type="InterPro" id="IPR011054">
    <property type="entry name" value="Rudment_hybrid_motif"/>
</dbReference>
<dbReference type="NCBIfam" id="TIGR00877">
    <property type="entry name" value="purD"/>
    <property type="match status" value="1"/>
</dbReference>
<dbReference type="PANTHER" id="PTHR43472">
    <property type="entry name" value="PHOSPHORIBOSYLAMINE--GLYCINE LIGASE"/>
    <property type="match status" value="1"/>
</dbReference>
<dbReference type="PANTHER" id="PTHR43472:SF1">
    <property type="entry name" value="PHOSPHORIBOSYLAMINE--GLYCINE LIGASE, CHLOROPLASTIC"/>
    <property type="match status" value="1"/>
</dbReference>
<dbReference type="Pfam" id="PF01071">
    <property type="entry name" value="GARS_A"/>
    <property type="match status" value="1"/>
</dbReference>
<dbReference type="Pfam" id="PF02843">
    <property type="entry name" value="GARS_C"/>
    <property type="match status" value="1"/>
</dbReference>
<dbReference type="Pfam" id="PF02844">
    <property type="entry name" value="GARS_N"/>
    <property type="match status" value="1"/>
</dbReference>
<dbReference type="SMART" id="SM01209">
    <property type="entry name" value="GARS_A"/>
    <property type="match status" value="1"/>
</dbReference>
<dbReference type="SMART" id="SM01210">
    <property type="entry name" value="GARS_C"/>
    <property type="match status" value="1"/>
</dbReference>
<dbReference type="SUPFAM" id="SSF56059">
    <property type="entry name" value="Glutathione synthetase ATP-binding domain-like"/>
    <property type="match status" value="1"/>
</dbReference>
<dbReference type="SUPFAM" id="SSF52440">
    <property type="entry name" value="PreATP-grasp domain"/>
    <property type="match status" value="1"/>
</dbReference>
<dbReference type="SUPFAM" id="SSF51246">
    <property type="entry name" value="Rudiment single hybrid motif"/>
    <property type="match status" value="1"/>
</dbReference>
<dbReference type="PROSITE" id="PS50975">
    <property type="entry name" value="ATP_GRASP"/>
    <property type="match status" value="1"/>
</dbReference>
<dbReference type="PROSITE" id="PS00184">
    <property type="entry name" value="GARS"/>
    <property type="match status" value="1"/>
</dbReference>
<protein>
    <recommendedName>
        <fullName evidence="2">Phosphoribosylamine--glycine ligase</fullName>
        <ecNumber evidence="2">6.3.4.13</ecNumber>
    </recommendedName>
    <alternativeName>
        <fullName evidence="2">GARS</fullName>
    </alternativeName>
    <alternativeName>
        <fullName evidence="2">Glycinamide ribonucleotide synthetase</fullName>
    </alternativeName>
    <alternativeName>
        <fullName evidence="2">Phosphoribosylglycinamide synthetase</fullName>
    </alternativeName>
</protein>
<keyword id="KW-0067">ATP-binding</keyword>
<keyword id="KW-0436">Ligase</keyword>
<keyword id="KW-0460">Magnesium</keyword>
<keyword id="KW-0464">Manganese</keyword>
<keyword id="KW-0479">Metal-binding</keyword>
<keyword id="KW-0547">Nucleotide-binding</keyword>
<keyword id="KW-0658">Purine biosynthesis</keyword>
<proteinExistence type="inferred from homology"/>
<sequence length="429" mass="45791">MRVLIIGSGGREHALGWKAAQNPNVETIFIAPGNAGTALEPKLENVNIDVEDIAGLVAFAKEKAIELTIVGPEAPLVIGVVDAFREAGLPIFGPTQAAAQLEGSKAFTKDFLARHQIPTGAYANFTEIEPALAYVREQGAPIVVKADGLAAGKGVIVAMTLEEAEDAIKDMLAGNAFGDAGSRVVIEEFLDGEEASFIVMVDGENVLPMATSQDHKRVGDKDTGPNTGGMGAYSPAPVVTPEIHNRIMEEVIYPTVRGMASEGNPYTGFLYAGLMIDKDGTPKVIEYNCRFGDPETQPIMMRMESDLVDLCLAAIDEKLDQVESKWDPRASIGIVLAAGGYPAAYNKGDVISGLPQVEIEGEKVFHAGTDNQDGDIVTNGGRVLCATALGNSVSEAQQRAYELAKQISWDGMFHRNDIGYRAIAREQEK</sequence>
<comment type="catalytic activity">
    <reaction evidence="2">
        <text>5-phospho-beta-D-ribosylamine + glycine + ATP = N(1)-(5-phospho-beta-D-ribosyl)glycinamide + ADP + phosphate + H(+)</text>
        <dbReference type="Rhea" id="RHEA:17453"/>
        <dbReference type="ChEBI" id="CHEBI:15378"/>
        <dbReference type="ChEBI" id="CHEBI:30616"/>
        <dbReference type="ChEBI" id="CHEBI:43474"/>
        <dbReference type="ChEBI" id="CHEBI:57305"/>
        <dbReference type="ChEBI" id="CHEBI:58681"/>
        <dbReference type="ChEBI" id="CHEBI:143788"/>
        <dbReference type="ChEBI" id="CHEBI:456216"/>
        <dbReference type="EC" id="6.3.4.13"/>
    </reaction>
</comment>
<comment type="cofactor">
    <cofactor evidence="1">
        <name>Mg(2+)</name>
        <dbReference type="ChEBI" id="CHEBI:18420"/>
    </cofactor>
    <cofactor evidence="1">
        <name>Mn(2+)</name>
        <dbReference type="ChEBI" id="CHEBI:29035"/>
    </cofactor>
    <text evidence="1">Binds 1 Mg(2+) or Mn(2+) ion per subunit.</text>
</comment>
<comment type="pathway">
    <text evidence="2">Purine metabolism; IMP biosynthesis via de novo pathway; N(1)-(5-phospho-D-ribosyl)glycinamide from 5-phospho-alpha-D-ribose 1-diphosphate: step 2/2.</text>
</comment>
<comment type="similarity">
    <text evidence="2">Belongs to the GARS family.</text>
</comment>
<evidence type="ECO:0000250" key="1"/>
<evidence type="ECO:0000255" key="2">
    <source>
        <dbReference type="HAMAP-Rule" id="MF_00138"/>
    </source>
</evidence>
<evidence type="ECO:0000256" key="3">
    <source>
        <dbReference type="SAM" id="MobiDB-lite"/>
    </source>
</evidence>
<accession>Q87KS8</accession>
<reference key="1">
    <citation type="journal article" date="2003" name="Lancet">
        <title>Genome sequence of Vibrio parahaemolyticus: a pathogenic mechanism distinct from that of V. cholerae.</title>
        <authorList>
            <person name="Makino K."/>
            <person name="Oshima K."/>
            <person name="Kurokawa K."/>
            <person name="Yokoyama K."/>
            <person name="Uda T."/>
            <person name="Tagomori K."/>
            <person name="Iijima Y."/>
            <person name="Najima M."/>
            <person name="Nakano M."/>
            <person name="Yamashita A."/>
            <person name="Kubota Y."/>
            <person name="Kimura S."/>
            <person name="Yasunaga T."/>
            <person name="Honda T."/>
            <person name="Shinagawa H."/>
            <person name="Hattori M."/>
            <person name="Iida T."/>
        </authorList>
    </citation>
    <scope>NUCLEOTIDE SEQUENCE [LARGE SCALE GENOMIC DNA]</scope>
    <source>
        <strain>RIMD 2210633</strain>
    </source>
</reference>
<gene>
    <name evidence="2" type="primary">purD</name>
    <name type="ordered locus">VP2898</name>
</gene>
<feature type="chain" id="PRO_0000151498" description="Phosphoribosylamine--glycine ligase">
    <location>
        <begin position="1"/>
        <end position="429"/>
    </location>
</feature>
<feature type="domain" description="ATP-grasp" evidence="2">
    <location>
        <begin position="109"/>
        <end position="316"/>
    </location>
</feature>
<feature type="region of interest" description="Disordered" evidence="3">
    <location>
        <begin position="212"/>
        <end position="235"/>
    </location>
</feature>
<feature type="compositionally biased region" description="Basic and acidic residues" evidence="3">
    <location>
        <begin position="213"/>
        <end position="223"/>
    </location>
</feature>
<feature type="binding site" evidence="2">
    <location>
        <begin position="135"/>
        <end position="196"/>
    </location>
    <ligand>
        <name>ATP</name>
        <dbReference type="ChEBI" id="CHEBI:30616"/>
    </ligand>
</feature>
<feature type="binding site" evidence="2">
    <location>
        <position position="286"/>
    </location>
    <ligand>
        <name>Mg(2+)</name>
        <dbReference type="ChEBI" id="CHEBI:18420"/>
    </ligand>
</feature>
<feature type="binding site" evidence="2">
    <location>
        <position position="288"/>
    </location>
    <ligand>
        <name>Mg(2+)</name>
        <dbReference type="ChEBI" id="CHEBI:18420"/>
    </ligand>
</feature>
<organism>
    <name type="scientific">Vibrio parahaemolyticus serotype O3:K6 (strain RIMD 2210633)</name>
    <dbReference type="NCBI Taxonomy" id="223926"/>
    <lineage>
        <taxon>Bacteria</taxon>
        <taxon>Pseudomonadati</taxon>
        <taxon>Pseudomonadota</taxon>
        <taxon>Gammaproteobacteria</taxon>
        <taxon>Vibrionales</taxon>
        <taxon>Vibrionaceae</taxon>
        <taxon>Vibrio</taxon>
    </lineage>
</organism>
<name>PUR2_VIBPA</name>